<proteinExistence type="evidence at protein level"/>
<sequence>MTASASRPLLGCIADDFTGATDLANMLVKSGMRTVQTIGVPAESASIDADAIVVALKSRTIPAADAVAQSLAAYEWLRAQGCRQFFFKYCSTFDSTDAGNIGPVADALLDAAGGGFTIACPAFPENGRTIYRGHLFVGDVLLNESGMENHPLTPMKDANLVRVLQRQTSSKVGLIRYDTIARGAADVRACIAQLRADGVRIAIADALSDRDLYVLGEACAALPLVTGGSGIALGLPENFRRAAELAARDNAASLPRIDGTATVLAGSASKATNAQVAAWRATRPSFRIDPLAAARGEPVVDQALAFARSHLPEPVLIYATATPDEVKAVQQALGVEAAGELVERTLAAIAHGLRALGVRKFVVAGGETSGAVVQALGVKSLQIGAQIDPGVPATATIDTEPLGLALKSGNFGAVDFFDKALRALDGAA</sequence>
<comment type="function">
    <text evidence="2">Catalyzes the ATP-dependent phosphorylation of 3-oxo-tetronate to 3-oxo-tetronate 4-phosphate.</text>
</comment>
<comment type="catalytic activity">
    <reaction evidence="2">
        <text>3-dehydro-L-erythronate + ATP = 3-dehydro-4-O-phospho-L-erythronate + ADP + H(+)</text>
        <dbReference type="Rhea" id="RHEA:52552"/>
        <dbReference type="ChEBI" id="CHEBI:15378"/>
        <dbReference type="ChEBI" id="CHEBI:30616"/>
        <dbReference type="ChEBI" id="CHEBI:136592"/>
        <dbReference type="ChEBI" id="CHEBI:136670"/>
        <dbReference type="ChEBI" id="CHEBI:456216"/>
        <dbReference type="EC" id="2.7.1.217"/>
    </reaction>
</comment>
<comment type="catalytic activity">
    <reaction evidence="2">
        <text>3-dehydro-D-erythronate + ATP = 3-dehydro-4-O-phospho-D-erythronate + ADP + H(+)</text>
        <dbReference type="Rhea" id="RHEA:52556"/>
        <dbReference type="ChEBI" id="CHEBI:15378"/>
        <dbReference type="ChEBI" id="CHEBI:30616"/>
        <dbReference type="ChEBI" id="CHEBI:57958"/>
        <dbReference type="ChEBI" id="CHEBI:136593"/>
        <dbReference type="ChEBI" id="CHEBI:456216"/>
        <dbReference type="EC" id="2.7.1.217"/>
    </reaction>
</comment>
<comment type="similarity">
    <text evidence="4">Belongs to the four-carbon acid sugar kinase family.</text>
</comment>
<dbReference type="EC" id="2.7.1.217" evidence="2"/>
<dbReference type="EMBL" id="AP009386">
    <property type="protein sequence ID" value="BAG46862.1"/>
    <property type="molecule type" value="Genomic_DNA"/>
</dbReference>
<dbReference type="RefSeq" id="WP_012216436.1">
    <property type="nucleotide sequence ID" value="NC_010086.1"/>
</dbReference>
<dbReference type="SMR" id="A0A0H3KP73"/>
<dbReference type="STRING" id="395019.BMULJ_05018"/>
<dbReference type="KEGG" id="bmj:BMULJ_05018"/>
<dbReference type="KEGG" id="bmu:Bmul_3499"/>
<dbReference type="eggNOG" id="COG3395">
    <property type="taxonomic scope" value="Bacteria"/>
</dbReference>
<dbReference type="HOGENOM" id="CLU_029424_1_0_4"/>
<dbReference type="Proteomes" id="UP000008815">
    <property type="component" value="Chromosome 2"/>
</dbReference>
<dbReference type="GO" id="GO:0005524">
    <property type="term" value="F:ATP binding"/>
    <property type="evidence" value="ECO:0007669"/>
    <property type="project" value="UniProtKB-KW"/>
</dbReference>
<dbReference type="GO" id="GO:0016301">
    <property type="term" value="F:kinase activity"/>
    <property type="evidence" value="ECO:0007669"/>
    <property type="project" value="UniProtKB-KW"/>
</dbReference>
<dbReference type="Gene3D" id="3.40.980.20">
    <property type="entry name" value="Four-carbon acid sugar kinase, nucleotide binding domain"/>
    <property type="match status" value="1"/>
</dbReference>
<dbReference type="Gene3D" id="3.40.50.10840">
    <property type="entry name" value="Putative sugar-binding, N-terminal domain"/>
    <property type="match status" value="1"/>
</dbReference>
<dbReference type="InterPro" id="IPR010737">
    <property type="entry name" value="4-carb_acid_sugar_kinase_N"/>
</dbReference>
<dbReference type="InterPro" id="IPR037051">
    <property type="entry name" value="4-carb_acid_sugar_kinase_N_sf"/>
</dbReference>
<dbReference type="InterPro" id="IPR031475">
    <property type="entry name" value="NBD_C"/>
</dbReference>
<dbReference type="InterPro" id="IPR042213">
    <property type="entry name" value="NBD_C_sf"/>
</dbReference>
<dbReference type="InterPro" id="IPR050007">
    <property type="entry name" value="OtnK"/>
</dbReference>
<dbReference type="NCBIfam" id="NF043035">
    <property type="entry name" value="OxoTetrKin"/>
    <property type="match status" value="1"/>
</dbReference>
<dbReference type="Pfam" id="PF17042">
    <property type="entry name" value="NBD_C"/>
    <property type="match status" value="1"/>
</dbReference>
<dbReference type="Pfam" id="PF07005">
    <property type="entry name" value="SBD_N"/>
    <property type="match status" value="1"/>
</dbReference>
<dbReference type="SUPFAM" id="SSF142764">
    <property type="entry name" value="YgbK-like"/>
    <property type="match status" value="1"/>
</dbReference>
<feature type="chain" id="PRO_0000439680" description="3-oxo-tetronate kinase">
    <location>
        <begin position="1"/>
        <end position="428"/>
    </location>
</feature>
<feature type="binding site" evidence="1">
    <location>
        <position position="267"/>
    </location>
    <ligand>
        <name>ATP</name>
        <dbReference type="ChEBI" id="CHEBI:30616"/>
    </ligand>
</feature>
<feature type="binding site" evidence="1">
    <location>
        <begin position="365"/>
        <end position="368"/>
    </location>
    <ligand>
        <name>ATP</name>
        <dbReference type="ChEBI" id="CHEBI:30616"/>
    </ligand>
</feature>
<feature type="binding site" evidence="1">
    <location>
        <position position="409"/>
    </location>
    <ligand>
        <name>ATP</name>
        <dbReference type="ChEBI" id="CHEBI:30616"/>
    </ligand>
</feature>
<protein>
    <recommendedName>
        <fullName evidence="3">3-oxo-tetronate kinase</fullName>
        <ecNumber evidence="2">2.7.1.217</ecNumber>
    </recommendedName>
    <alternativeName>
        <fullName evidence="4">3-dehydrotetronate 4-kinase</fullName>
    </alternativeName>
</protein>
<gene>
    <name evidence="3" type="primary">otnK</name>
    <name evidence="5" type="ordered locus">BMULJ_05018</name>
</gene>
<accession>A0A0H3KP73</accession>
<organism>
    <name type="scientific">Burkholderia multivorans (strain ATCC 17616 / 249)</name>
    <dbReference type="NCBI Taxonomy" id="395019"/>
    <lineage>
        <taxon>Bacteria</taxon>
        <taxon>Pseudomonadati</taxon>
        <taxon>Pseudomonadota</taxon>
        <taxon>Betaproteobacteria</taxon>
        <taxon>Burkholderiales</taxon>
        <taxon>Burkholderiaceae</taxon>
        <taxon>Burkholderia</taxon>
        <taxon>Burkholderia cepacia complex</taxon>
    </lineage>
</organism>
<reference key="1">
    <citation type="submission" date="2007-04" db="EMBL/GenBank/DDBJ databases">
        <title>Complete genome sequence of Burkholderia multivorans ATCC 17616.</title>
        <authorList>
            <person name="Ohtsubo Y."/>
            <person name="Yamashita A."/>
            <person name="Kurokawa K."/>
            <person name="Takami H."/>
            <person name="Yuhara S."/>
            <person name="Nishiyama E."/>
            <person name="Endo R."/>
            <person name="Miyazaki R."/>
            <person name="Ono A."/>
            <person name="Yano K."/>
            <person name="Ito M."/>
            <person name="Sota M."/>
            <person name="Yuji N."/>
            <person name="Hattori M."/>
            <person name="Tsuda M."/>
        </authorList>
    </citation>
    <scope>NUCLEOTIDE SEQUENCE [LARGE SCALE GENOMIC DNA]</scope>
    <source>
        <strain>ATCC 17616 / 249</strain>
    </source>
</reference>
<reference key="2">
    <citation type="journal article" date="2016" name="Proc. Natl. Acad. Sci. U.S.A.">
        <title>Assignment of function to a domain of unknown function: DUF1537 is a new kinase family in catabolic pathways for acid sugars.</title>
        <authorList>
            <person name="Zhang X."/>
            <person name="Carter M.S."/>
            <person name="Vetting M.W."/>
            <person name="San Francisco B."/>
            <person name="Zhao S."/>
            <person name="Al-Obaidi N.F."/>
            <person name="Solbiati J.O."/>
            <person name="Thiaville J.J."/>
            <person name="de Crecy-Lagard V."/>
            <person name="Jacobson M.P."/>
            <person name="Almo S.C."/>
            <person name="Gerlt J.A."/>
        </authorList>
    </citation>
    <scope>FUNCTION</scope>
    <scope>CATALYTIC ACTIVITY</scope>
    <source>
        <strain>ATCC 17616 / 249</strain>
    </source>
</reference>
<evidence type="ECO:0000250" key="1">
    <source>
        <dbReference type="UniProtKB" id="Q0KBC8"/>
    </source>
</evidence>
<evidence type="ECO:0000269" key="2">
    <source>
    </source>
</evidence>
<evidence type="ECO:0000303" key="3">
    <source>
    </source>
</evidence>
<evidence type="ECO:0000305" key="4"/>
<evidence type="ECO:0000312" key="5">
    <source>
        <dbReference type="EMBL" id="BAG46862.1"/>
    </source>
</evidence>
<keyword id="KW-0067">ATP-binding</keyword>
<keyword id="KW-0119">Carbohydrate metabolism</keyword>
<keyword id="KW-0418">Kinase</keyword>
<keyword id="KW-0547">Nucleotide-binding</keyword>
<keyword id="KW-1185">Reference proteome</keyword>
<keyword id="KW-0808">Transferase</keyword>
<name>OTNK_BURM1</name>